<name>KCY_STRP6</name>
<keyword id="KW-0067">ATP-binding</keyword>
<keyword id="KW-0963">Cytoplasm</keyword>
<keyword id="KW-0903">Direct protein sequencing</keyword>
<keyword id="KW-0418">Kinase</keyword>
<keyword id="KW-0547">Nucleotide-binding</keyword>
<keyword id="KW-0808">Transferase</keyword>
<evidence type="ECO:0000255" key="1">
    <source>
        <dbReference type="HAMAP-Rule" id="MF_00238"/>
    </source>
</evidence>
<evidence type="ECO:0000269" key="2">
    <source ref="2"/>
</evidence>
<evidence type="ECO:0000305" key="3"/>
<feature type="chain" id="PRO_0000131989" description="Cytidylate kinase">
    <location>
        <begin position="1"/>
        <end position="226"/>
    </location>
</feature>
<feature type="binding site" evidence="1">
    <location>
        <begin position="10"/>
        <end position="18"/>
    </location>
    <ligand>
        <name>ATP</name>
        <dbReference type="ChEBI" id="CHEBI:30616"/>
    </ligand>
</feature>
<feature type="sequence conflict" description="In Ref. 2; AA sequence." evidence="3" ref="2">
    <original>V</original>
    <variation>I</variation>
    <location>
        <position position="102"/>
    </location>
</feature>
<protein>
    <recommendedName>
        <fullName evidence="1">Cytidylate kinase</fullName>
        <shortName evidence="1">CK</shortName>
        <ecNumber evidence="1">2.7.4.25</ecNumber>
    </recommendedName>
    <alternativeName>
        <fullName evidence="1">Cytidine monophosphate kinase</fullName>
        <shortName evidence="1">CMP kinase</shortName>
    </alternativeName>
</protein>
<dbReference type="EC" id="2.7.4.25" evidence="1"/>
<dbReference type="EMBL" id="CP000003">
    <property type="protein sequence ID" value="AAT86770.1"/>
    <property type="molecule type" value="Genomic_DNA"/>
</dbReference>
<dbReference type="RefSeq" id="WP_011184377.1">
    <property type="nucleotide sequence ID" value="NC_006086.1"/>
</dbReference>
<dbReference type="SMR" id="Q5XCU3"/>
<dbReference type="KEGG" id="spa:M6_Spy0635"/>
<dbReference type="HOGENOM" id="CLU_079959_0_2_9"/>
<dbReference type="Proteomes" id="UP000001167">
    <property type="component" value="Chromosome"/>
</dbReference>
<dbReference type="GO" id="GO:0005829">
    <property type="term" value="C:cytosol"/>
    <property type="evidence" value="ECO:0007669"/>
    <property type="project" value="TreeGrafter"/>
</dbReference>
<dbReference type="GO" id="GO:0005524">
    <property type="term" value="F:ATP binding"/>
    <property type="evidence" value="ECO:0007669"/>
    <property type="project" value="UniProtKB-UniRule"/>
</dbReference>
<dbReference type="GO" id="GO:0036430">
    <property type="term" value="F:CMP kinase activity"/>
    <property type="evidence" value="ECO:0007669"/>
    <property type="project" value="RHEA"/>
</dbReference>
<dbReference type="GO" id="GO:0036431">
    <property type="term" value="F:dCMP kinase activity"/>
    <property type="evidence" value="ECO:0007669"/>
    <property type="project" value="RHEA"/>
</dbReference>
<dbReference type="GO" id="GO:0015949">
    <property type="term" value="P:nucleobase-containing small molecule interconversion"/>
    <property type="evidence" value="ECO:0007669"/>
    <property type="project" value="TreeGrafter"/>
</dbReference>
<dbReference type="GO" id="GO:0006220">
    <property type="term" value="P:pyrimidine nucleotide metabolic process"/>
    <property type="evidence" value="ECO:0007669"/>
    <property type="project" value="UniProtKB-UniRule"/>
</dbReference>
<dbReference type="CDD" id="cd02020">
    <property type="entry name" value="CMPK"/>
    <property type="match status" value="1"/>
</dbReference>
<dbReference type="FunFam" id="3.40.50.300:FF:000484">
    <property type="entry name" value="Cytidylate kinase"/>
    <property type="match status" value="1"/>
</dbReference>
<dbReference type="Gene3D" id="3.40.50.300">
    <property type="entry name" value="P-loop containing nucleotide triphosphate hydrolases"/>
    <property type="match status" value="1"/>
</dbReference>
<dbReference type="HAMAP" id="MF_00238">
    <property type="entry name" value="Cytidyl_kinase_type1"/>
    <property type="match status" value="1"/>
</dbReference>
<dbReference type="InterPro" id="IPR003136">
    <property type="entry name" value="Cytidylate_kin"/>
</dbReference>
<dbReference type="InterPro" id="IPR011994">
    <property type="entry name" value="Cytidylate_kinase_dom"/>
</dbReference>
<dbReference type="InterPro" id="IPR027417">
    <property type="entry name" value="P-loop_NTPase"/>
</dbReference>
<dbReference type="NCBIfam" id="TIGR00017">
    <property type="entry name" value="cmk"/>
    <property type="match status" value="1"/>
</dbReference>
<dbReference type="PANTHER" id="PTHR21299:SF2">
    <property type="entry name" value="CYTIDYLATE KINASE"/>
    <property type="match status" value="1"/>
</dbReference>
<dbReference type="PANTHER" id="PTHR21299">
    <property type="entry name" value="CYTIDYLATE KINASE/PANTOATE-BETA-ALANINE LIGASE"/>
    <property type="match status" value="1"/>
</dbReference>
<dbReference type="Pfam" id="PF02224">
    <property type="entry name" value="Cytidylate_kin"/>
    <property type="match status" value="1"/>
</dbReference>
<dbReference type="SUPFAM" id="SSF52540">
    <property type="entry name" value="P-loop containing nucleoside triphosphate hydrolases"/>
    <property type="match status" value="1"/>
</dbReference>
<reference key="1">
    <citation type="journal article" date="2004" name="J. Infect. Dis.">
        <title>Progress toward characterization of the group A Streptococcus metagenome: complete genome sequence of a macrolide-resistant serotype M6 strain.</title>
        <authorList>
            <person name="Banks D.J."/>
            <person name="Porcella S.F."/>
            <person name="Barbian K.D."/>
            <person name="Beres S.B."/>
            <person name="Philips L.E."/>
            <person name="Voyich J.M."/>
            <person name="DeLeo F.R."/>
            <person name="Martin J.M."/>
            <person name="Somerville G.A."/>
            <person name="Musser J.M."/>
        </authorList>
    </citation>
    <scope>NUCLEOTIDE SEQUENCE [LARGE SCALE GENOMIC DNA]</scope>
    <source>
        <strain>ATCC BAA-946 / MGAS10394</strain>
    </source>
</reference>
<reference key="2">
    <citation type="submission" date="2000-05" db="UniProtKB">
        <title>Two-dimensional gel electrophoresis map of Streptococcus pyogenes proteins.</title>
        <authorList>
            <person name="Hogan D.A."/>
            <person name="Du P."/>
            <person name="Stevenson T.I."/>
            <person name="Whitton M."/>
            <person name="Kilby G.W."/>
            <person name="Rogers J."/>
            <person name="VanBogelen R.A."/>
        </authorList>
    </citation>
    <scope>PROTEIN SEQUENCE OF 92-109; 131-143 AND 165-180</scope>
    <scope>MASS SPECTROMETRY</scope>
    <source>
        <strain>JRS4 / Serotype M6</strain>
    </source>
</reference>
<sequence>MKAIKIAIDGPASSGKSTVAKIIAKNLGYTYLDTGAMYRSATYIALTHGYTDKEVALILEELEKNPISFKKAKDGSQLVFLGDEDVTLVIRQNDVTNNVSWVSALPEIREELVHQQRRIAQAGGIIMDGRDIGTVVLPDAELKIFLVASVEERAERRYKENLEKGIESDFETLKEEIAARDYKDSHRKVSPLKAAEDALIFDTTGVSIDGVVQFIQEKAEKIVDMS</sequence>
<comment type="catalytic activity">
    <reaction evidence="1">
        <text>CMP + ATP = CDP + ADP</text>
        <dbReference type="Rhea" id="RHEA:11600"/>
        <dbReference type="ChEBI" id="CHEBI:30616"/>
        <dbReference type="ChEBI" id="CHEBI:58069"/>
        <dbReference type="ChEBI" id="CHEBI:60377"/>
        <dbReference type="ChEBI" id="CHEBI:456216"/>
        <dbReference type="EC" id="2.7.4.25"/>
    </reaction>
</comment>
<comment type="catalytic activity">
    <reaction evidence="1">
        <text>dCMP + ATP = dCDP + ADP</text>
        <dbReference type="Rhea" id="RHEA:25094"/>
        <dbReference type="ChEBI" id="CHEBI:30616"/>
        <dbReference type="ChEBI" id="CHEBI:57566"/>
        <dbReference type="ChEBI" id="CHEBI:58593"/>
        <dbReference type="ChEBI" id="CHEBI:456216"/>
        <dbReference type="EC" id="2.7.4.25"/>
    </reaction>
</comment>
<comment type="subcellular location">
    <subcellularLocation>
        <location evidence="1">Cytoplasm</location>
    </subcellularLocation>
</comment>
<comment type="mass spectrometry"/>
<comment type="similarity">
    <text evidence="1">Belongs to the cytidylate kinase family. Type 1 subfamily.</text>
</comment>
<proteinExistence type="evidence at protein level"/>
<gene>
    <name evidence="1" type="primary">cmk</name>
    <name type="ordered locus">M6_Spy0635</name>
</gene>
<accession>Q5XCU3</accession>
<accession>P82563</accession>
<organism>
    <name type="scientific">Streptococcus pyogenes serotype M6 (strain ATCC BAA-946 / MGAS10394)</name>
    <dbReference type="NCBI Taxonomy" id="286636"/>
    <lineage>
        <taxon>Bacteria</taxon>
        <taxon>Bacillati</taxon>
        <taxon>Bacillota</taxon>
        <taxon>Bacilli</taxon>
        <taxon>Lactobacillales</taxon>
        <taxon>Streptococcaceae</taxon>
        <taxon>Streptococcus</taxon>
    </lineage>
</organism>